<feature type="chain" id="PRO_1000057889" description="Phosphoribosylaminoimidazole-succinocarboxamide synthase">
    <location>
        <begin position="1"/>
        <end position="237"/>
    </location>
</feature>
<dbReference type="EC" id="6.3.2.6" evidence="1"/>
<dbReference type="EMBL" id="CP000826">
    <property type="protein sequence ID" value="ABV42605.1"/>
    <property type="molecule type" value="Genomic_DNA"/>
</dbReference>
<dbReference type="SMR" id="A8GHL5"/>
<dbReference type="STRING" id="399741.Spro_3507"/>
<dbReference type="KEGG" id="spe:Spro_3507"/>
<dbReference type="eggNOG" id="COG0152">
    <property type="taxonomic scope" value="Bacteria"/>
</dbReference>
<dbReference type="HOGENOM" id="CLU_061495_2_1_6"/>
<dbReference type="OrthoDB" id="9801549at2"/>
<dbReference type="UniPathway" id="UPA00074">
    <property type="reaction ID" value="UER00131"/>
</dbReference>
<dbReference type="GO" id="GO:0005829">
    <property type="term" value="C:cytosol"/>
    <property type="evidence" value="ECO:0007669"/>
    <property type="project" value="TreeGrafter"/>
</dbReference>
<dbReference type="GO" id="GO:0005524">
    <property type="term" value="F:ATP binding"/>
    <property type="evidence" value="ECO:0007669"/>
    <property type="project" value="UniProtKB-KW"/>
</dbReference>
<dbReference type="GO" id="GO:0004639">
    <property type="term" value="F:phosphoribosylaminoimidazolesuccinocarboxamide synthase activity"/>
    <property type="evidence" value="ECO:0007669"/>
    <property type="project" value="UniProtKB-UniRule"/>
</dbReference>
<dbReference type="GO" id="GO:0006189">
    <property type="term" value="P:'de novo' IMP biosynthetic process"/>
    <property type="evidence" value="ECO:0007669"/>
    <property type="project" value="UniProtKB-UniRule"/>
</dbReference>
<dbReference type="GO" id="GO:0009236">
    <property type="term" value="P:cobalamin biosynthetic process"/>
    <property type="evidence" value="ECO:0007669"/>
    <property type="project" value="InterPro"/>
</dbReference>
<dbReference type="CDD" id="cd01415">
    <property type="entry name" value="SAICAR_synt_PurC"/>
    <property type="match status" value="1"/>
</dbReference>
<dbReference type="FunFam" id="3.30.200.20:FF:000086">
    <property type="entry name" value="Phosphoribosylaminoimidazole-succinocarboxamide synthase"/>
    <property type="match status" value="1"/>
</dbReference>
<dbReference type="FunFam" id="3.30.470.20:FF:000006">
    <property type="entry name" value="Phosphoribosylaminoimidazole-succinocarboxamide synthase"/>
    <property type="match status" value="1"/>
</dbReference>
<dbReference type="Gene3D" id="3.30.470.20">
    <property type="entry name" value="ATP-grasp fold, B domain"/>
    <property type="match status" value="1"/>
</dbReference>
<dbReference type="Gene3D" id="3.30.200.20">
    <property type="entry name" value="Phosphorylase Kinase, domain 1"/>
    <property type="match status" value="1"/>
</dbReference>
<dbReference type="HAMAP" id="MF_00137">
    <property type="entry name" value="SAICAR_synth"/>
    <property type="match status" value="1"/>
</dbReference>
<dbReference type="InterPro" id="IPR028923">
    <property type="entry name" value="SAICAR_synt/ADE2_N"/>
</dbReference>
<dbReference type="InterPro" id="IPR033934">
    <property type="entry name" value="SAICAR_synt_PurC"/>
</dbReference>
<dbReference type="InterPro" id="IPR001636">
    <property type="entry name" value="SAICAR_synth"/>
</dbReference>
<dbReference type="InterPro" id="IPR050089">
    <property type="entry name" value="SAICAR_synthetase"/>
</dbReference>
<dbReference type="InterPro" id="IPR018236">
    <property type="entry name" value="SAICAR_synthetase_CS"/>
</dbReference>
<dbReference type="NCBIfam" id="TIGR00081">
    <property type="entry name" value="purC"/>
    <property type="match status" value="1"/>
</dbReference>
<dbReference type="PANTHER" id="PTHR43599">
    <property type="entry name" value="MULTIFUNCTIONAL PROTEIN ADE2"/>
    <property type="match status" value="1"/>
</dbReference>
<dbReference type="PANTHER" id="PTHR43599:SF3">
    <property type="entry name" value="SI:DKEY-6E2.2"/>
    <property type="match status" value="1"/>
</dbReference>
<dbReference type="Pfam" id="PF01259">
    <property type="entry name" value="SAICAR_synt"/>
    <property type="match status" value="1"/>
</dbReference>
<dbReference type="SUPFAM" id="SSF56104">
    <property type="entry name" value="SAICAR synthase-like"/>
    <property type="match status" value="1"/>
</dbReference>
<dbReference type="PROSITE" id="PS01057">
    <property type="entry name" value="SAICAR_SYNTHETASE_1"/>
    <property type="match status" value="1"/>
</dbReference>
<dbReference type="PROSITE" id="PS01058">
    <property type="entry name" value="SAICAR_SYNTHETASE_2"/>
    <property type="match status" value="1"/>
</dbReference>
<keyword id="KW-0067">ATP-binding</keyword>
<keyword id="KW-0436">Ligase</keyword>
<keyword id="KW-0547">Nucleotide-binding</keyword>
<keyword id="KW-0658">Purine biosynthesis</keyword>
<protein>
    <recommendedName>
        <fullName evidence="1">Phosphoribosylaminoimidazole-succinocarboxamide synthase</fullName>
        <ecNumber evidence="1">6.3.2.6</ecNumber>
    </recommendedName>
    <alternativeName>
        <fullName evidence="1">SAICAR synthetase</fullName>
    </alternativeName>
</protein>
<accession>A8GHL5</accession>
<name>PUR7_SERP5</name>
<reference key="1">
    <citation type="submission" date="2007-09" db="EMBL/GenBank/DDBJ databases">
        <title>Complete sequence of chromosome of Serratia proteamaculans 568.</title>
        <authorList>
            <consortium name="US DOE Joint Genome Institute"/>
            <person name="Copeland A."/>
            <person name="Lucas S."/>
            <person name="Lapidus A."/>
            <person name="Barry K."/>
            <person name="Glavina del Rio T."/>
            <person name="Dalin E."/>
            <person name="Tice H."/>
            <person name="Pitluck S."/>
            <person name="Chain P."/>
            <person name="Malfatti S."/>
            <person name="Shin M."/>
            <person name="Vergez L."/>
            <person name="Schmutz J."/>
            <person name="Larimer F."/>
            <person name="Land M."/>
            <person name="Hauser L."/>
            <person name="Kyrpides N."/>
            <person name="Kim E."/>
            <person name="Taghavi S."/>
            <person name="Newman L."/>
            <person name="Vangronsveld J."/>
            <person name="van der Lelie D."/>
            <person name="Richardson P."/>
        </authorList>
    </citation>
    <scope>NUCLEOTIDE SEQUENCE [LARGE SCALE GENOMIC DNA]</scope>
    <source>
        <strain>568</strain>
    </source>
</reference>
<evidence type="ECO:0000255" key="1">
    <source>
        <dbReference type="HAMAP-Rule" id="MF_00137"/>
    </source>
</evidence>
<organism>
    <name type="scientific">Serratia proteamaculans (strain 568)</name>
    <dbReference type="NCBI Taxonomy" id="399741"/>
    <lineage>
        <taxon>Bacteria</taxon>
        <taxon>Pseudomonadati</taxon>
        <taxon>Pseudomonadota</taxon>
        <taxon>Gammaproteobacteria</taxon>
        <taxon>Enterobacterales</taxon>
        <taxon>Yersiniaceae</taxon>
        <taxon>Serratia</taxon>
    </lineage>
</organism>
<proteinExistence type="inferred from homology"/>
<sequence length="237" mass="27211">MQKLAELYRGKAKTVYTTENPDLLVLEFRNDTSALDGQRIEQFDRKGMVNNKFNHFIMSKLEEAGIPTQMERLLSDNEVLVKKLDMVPVECVIRNRAAGSLVKRLGIEEGLVLNPPLFDLFLKNDEMHDPMVNESYCETFGWVNKQHLARMRELSYQANDVLSKLFDDAGLILVDFKLEFGLFNGEVVLGDEFSPDGSRLWDKNTLDKMDKDRFRQSLGGLIEAYEEVARRIGVKLD</sequence>
<comment type="catalytic activity">
    <reaction evidence="1">
        <text>5-amino-1-(5-phospho-D-ribosyl)imidazole-4-carboxylate + L-aspartate + ATP = (2S)-2-[5-amino-1-(5-phospho-beta-D-ribosyl)imidazole-4-carboxamido]succinate + ADP + phosphate + 2 H(+)</text>
        <dbReference type="Rhea" id="RHEA:22628"/>
        <dbReference type="ChEBI" id="CHEBI:15378"/>
        <dbReference type="ChEBI" id="CHEBI:29991"/>
        <dbReference type="ChEBI" id="CHEBI:30616"/>
        <dbReference type="ChEBI" id="CHEBI:43474"/>
        <dbReference type="ChEBI" id="CHEBI:58443"/>
        <dbReference type="ChEBI" id="CHEBI:77657"/>
        <dbReference type="ChEBI" id="CHEBI:456216"/>
        <dbReference type="EC" id="6.3.2.6"/>
    </reaction>
</comment>
<comment type="pathway">
    <text evidence="1">Purine metabolism; IMP biosynthesis via de novo pathway; 5-amino-1-(5-phospho-D-ribosyl)imidazole-4-carboxamide from 5-amino-1-(5-phospho-D-ribosyl)imidazole-4-carboxylate: step 1/2.</text>
</comment>
<comment type="similarity">
    <text evidence="1">Belongs to the SAICAR synthetase family.</text>
</comment>
<gene>
    <name evidence="1" type="primary">purC</name>
    <name type="ordered locus">Spro_3507</name>
</gene>